<organism>
    <name type="scientific">Staphylococcus aureus (strain MSSA476)</name>
    <dbReference type="NCBI Taxonomy" id="282459"/>
    <lineage>
        <taxon>Bacteria</taxon>
        <taxon>Bacillati</taxon>
        <taxon>Bacillota</taxon>
        <taxon>Bacilli</taxon>
        <taxon>Bacillales</taxon>
        <taxon>Staphylococcaceae</taxon>
        <taxon>Staphylococcus</taxon>
    </lineage>
</organism>
<comment type="function">
    <text evidence="1">Required for maturation of 30S ribosomal subunits.</text>
</comment>
<comment type="subcellular location">
    <subcellularLocation>
        <location evidence="1">Cytoplasm</location>
    </subcellularLocation>
</comment>
<comment type="similarity">
    <text evidence="1">Belongs to the RimP family.</text>
</comment>
<keyword id="KW-0963">Cytoplasm</keyword>
<keyword id="KW-0690">Ribosome biogenesis</keyword>
<dbReference type="EMBL" id="BX571857">
    <property type="protein sequence ID" value="CAG42976.1"/>
    <property type="molecule type" value="Genomic_DNA"/>
</dbReference>
<dbReference type="RefSeq" id="WP_000036631.1">
    <property type="nucleotide sequence ID" value="NC_002953.3"/>
</dbReference>
<dbReference type="SMR" id="Q6G9U8"/>
<dbReference type="KEGG" id="sas:SAS1199"/>
<dbReference type="HOGENOM" id="CLU_070525_2_0_9"/>
<dbReference type="GO" id="GO:0005829">
    <property type="term" value="C:cytosol"/>
    <property type="evidence" value="ECO:0007669"/>
    <property type="project" value="TreeGrafter"/>
</dbReference>
<dbReference type="GO" id="GO:0000028">
    <property type="term" value="P:ribosomal small subunit assembly"/>
    <property type="evidence" value="ECO:0007669"/>
    <property type="project" value="TreeGrafter"/>
</dbReference>
<dbReference type="GO" id="GO:0006412">
    <property type="term" value="P:translation"/>
    <property type="evidence" value="ECO:0007669"/>
    <property type="project" value="TreeGrafter"/>
</dbReference>
<dbReference type="CDD" id="cd01734">
    <property type="entry name" value="YlxS_C"/>
    <property type="match status" value="1"/>
</dbReference>
<dbReference type="FunFam" id="3.30.300.70:FF:000001">
    <property type="entry name" value="Ribosome maturation factor RimP"/>
    <property type="match status" value="1"/>
</dbReference>
<dbReference type="Gene3D" id="2.30.30.180">
    <property type="entry name" value="Ribosome maturation factor RimP, C-terminal domain"/>
    <property type="match status" value="1"/>
</dbReference>
<dbReference type="Gene3D" id="3.30.300.70">
    <property type="entry name" value="RimP-like superfamily, N-terminal"/>
    <property type="match status" value="1"/>
</dbReference>
<dbReference type="HAMAP" id="MF_01077">
    <property type="entry name" value="RimP"/>
    <property type="match status" value="1"/>
</dbReference>
<dbReference type="InterPro" id="IPR003728">
    <property type="entry name" value="Ribosome_maturation_RimP"/>
</dbReference>
<dbReference type="InterPro" id="IPR028998">
    <property type="entry name" value="RimP_C"/>
</dbReference>
<dbReference type="InterPro" id="IPR036847">
    <property type="entry name" value="RimP_C_sf"/>
</dbReference>
<dbReference type="InterPro" id="IPR028989">
    <property type="entry name" value="RimP_N"/>
</dbReference>
<dbReference type="InterPro" id="IPR035956">
    <property type="entry name" value="RimP_N_sf"/>
</dbReference>
<dbReference type="NCBIfam" id="NF000928">
    <property type="entry name" value="PRK00092.1-2"/>
    <property type="match status" value="1"/>
</dbReference>
<dbReference type="PANTHER" id="PTHR33867">
    <property type="entry name" value="RIBOSOME MATURATION FACTOR RIMP"/>
    <property type="match status" value="1"/>
</dbReference>
<dbReference type="PANTHER" id="PTHR33867:SF1">
    <property type="entry name" value="RIBOSOME MATURATION FACTOR RIMP"/>
    <property type="match status" value="1"/>
</dbReference>
<dbReference type="Pfam" id="PF17384">
    <property type="entry name" value="DUF150_C"/>
    <property type="match status" value="1"/>
</dbReference>
<dbReference type="Pfam" id="PF02576">
    <property type="entry name" value="RimP_N"/>
    <property type="match status" value="1"/>
</dbReference>
<dbReference type="SUPFAM" id="SSF74942">
    <property type="entry name" value="YhbC-like, C-terminal domain"/>
    <property type="match status" value="1"/>
</dbReference>
<dbReference type="SUPFAM" id="SSF75420">
    <property type="entry name" value="YhbC-like, N-terminal domain"/>
    <property type="match status" value="1"/>
</dbReference>
<evidence type="ECO:0000255" key="1">
    <source>
        <dbReference type="HAMAP-Rule" id="MF_01077"/>
    </source>
</evidence>
<feature type="chain" id="PRO_0000181923" description="Ribosome maturation factor RimP">
    <location>
        <begin position="1"/>
        <end position="155"/>
    </location>
</feature>
<proteinExistence type="inferred from homology"/>
<protein>
    <recommendedName>
        <fullName evidence="1">Ribosome maturation factor RimP</fullName>
    </recommendedName>
</protein>
<reference key="1">
    <citation type="journal article" date="2004" name="Proc. Natl. Acad. Sci. U.S.A.">
        <title>Complete genomes of two clinical Staphylococcus aureus strains: evidence for the rapid evolution of virulence and drug resistance.</title>
        <authorList>
            <person name="Holden M.T.G."/>
            <person name="Feil E.J."/>
            <person name="Lindsay J.A."/>
            <person name="Peacock S.J."/>
            <person name="Day N.P.J."/>
            <person name="Enright M.C."/>
            <person name="Foster T.J."/>
            <person name="Moore C.E."/>
            <person name="Hurst L."/>
            <person name="Atkin R."/>
            <person name="Barron A."/>
            <person name="Bason N."/>
            <person name="Bentley S.D."/>
            <person name="Chillingworth C."/>
            <person name="Chillingworth T."/>
            <person name="Churcher C."/>
            <person name="Clark L."/>
            <person name="Corton C."/>
            <person name="Cronin A."/>
            <person name="Doggett J."/>
            <person name="Dowd L."/>
            <person name="Feltwell T."/>
            <person name="Hance Z."/>
            <person name="Harris B."/>
            <person name="Hauser H."/>
            <person name="Holroyd S."/>
            <person name="Jagels K."/>
            <person name="James K.D."/>
            <person name="Lennard N."/>
            <person name="Line A."/>
            <person name="Mayes R."/>
            <person name="Moule S."/>
            <person name="Mungall K."/>
            <person name="Ormond D."/>
            <person name="Quail M.A."/>
            <person name="Rabbinowitsch E."/>
            <person name="Rutherford K.M."/>
            <person name="Sanders M."/>
            <person name="Sharp S."/>
            <person name="Simmonds M."/>
            <person name="Stevens K."/>
            <person name="Whitehead S."/>
            <person name="Barrell B.G."/>
            <person name="Spratt B.G."/>
            <person name="Parkhill J."/>
        </authorList>
    </citation>
    <scope>NUCLEOTIDE SEQUENCE [LARGE SCALE GENOMIC DNA]</scope>
    <source>
        <strain>MSSA476</strain>
    </source>
</reference>
<gene>
    <name evidence="1" type="primary">rimP</name>
    <name type="ordered locus">SAS1199</name>
</gene>
<accession>Q6G9U8</accession>
<name>RIMP_STAAS</name>
<sequence length="155" mass="17627">MSKITEQVEVIVKPIMEDLNFELVDVEYVKEGRDHFLRISIDKEGGVDLNDCTLASEKISEAMDANDPIPEMYYLDVASPGAERPIKKEQDFQNAITKPVFVSLYVPIEGEKEWLGILQEVNNETIVVQVKIKARTKDIEIPRDKIAKARHAVMI</sequence>